<sequence>MSPTGSPATPALRHRTVLLDEAVEALVWRPDGVYVDGTFGRGGHSRAVLARLGPDGALVAFDKDPAAIAEAGTIQDARFSIEHESFAAMGERLAGRGHVAGVLLDLGISSPQIDEAARGFSFRFEGPLDMRMDTTRGITAAEWLAQAEEQDIARVIRDYGEERFAVQIAKAIVARRREPGDGGPLATTADLAALVAKAVKTREKGQDPATRTFQALRIHINQELEDLERGLKAAYDLLQVGGRLVVISFHSLEDRIVKRFMAAHARPQQDADPALRRAPLRAADLPQPTLRLLGRVKPGAQEVADNPRARSAVMRVAEKLAPAASGRGAAPA</sequence>
<dbReference type="EC" id="2.1.1.199" evidence="1"/>
<dbReference type="EMBL" id="CP000090">
    <property type="protein sequence ID" value="AAZ62347.1"/>
    <property type="molecule type" value="Genomic_DNA"/>
</dbReference>
<dbReference type="SMR" id="Q46WY6"/>
<dbReference type="STRING" id="264198.Reut_A2987"/>
<dbReference type="KEGG" id="reu:Reut_A2987"/>
<dbReference type="eggNOG" id="COG0275">
    <property type="taxonomic scope" value="Bacteria"/>
</dbReference>
<dbReference type="HOGENOM" id="CLU_038422_2_0_4"/>
<dbReference type="OrthoDB" id="9806637at2"/>
<dbReference type="GO" id="GO:0005737">
    <property type="term" value="C:cytoplasm"/>
    <property type="evidence" value="ECO:0007669"/>
    <property type="project" value="UniProtKB-SubCell"/>
</dbReference>
<dbReference type="GO" id="GO:0071424">
    <property type="term" value="F:rRNA (cytosine-N4-)-methyltransferase activity"/>
    <property type="evidence" value="ECO:0007669"/>
    <property type="project" value="UniProtKB-UniRule"/>
</dbReference>
<dbReference type="GO" id="GO:0070475">
    <property type="term" value="P:rRNA base methylation"/>
    <property type="evidence" value="ECO:0007669"/>
    <property type="project" value="UniProtKB-UniRule"/>
</dbReference>
<dbReference type="Gene3D" id="1.10.150.170">
    <property type="entry name" value="Putative methyltransferase TM0872, insert domain"/>
    <property type="match status" value="1"/>
</dbReference>
<dbReference type="Gene3D" id="3.40.50.150">
    <property type="entry name" value="Vaccinia Virus protein VP39"/>
    <property type="match status" value="1"/>
</dbReference>
<dbReference type="HAMAP" id="MF_01007">
    <property type="entry name" value="16SrRNA_methyltr_H"/>
    <property type="match status" value="1"/>
</dbReference>
<dbReference type="InterPro" id="IPR002903">
    <property type="entry name" value="RsmH"/>
</dbReference>
<dbReference type="InterPro" id="IPR023397">
    <property type="entry name" value="SAM-dep_MeTrfase_MraW_recog"/>
</dbReference>
<dbReference type="InterPro" id="IPR029063">
    <property type="entry name" value="SAM-dependent_MTases_sf"/>
</dbReference>
<dbReference type="NCBIfam" id="TIGR00006">
    <property type="entry name" value="16S rRNA (cytosine(1402)-N(4))-methyltransferase RsmH"/>
    <property type="match status" value="1"/>
</dbReference>
<dbReference type="PANTHER" id="PTHR11265:SF0">
    <property type="entry name" value="12S RRNA N4-METHYLCYTIDINE METHYLTRANSFERASE"/>
    <property type="match status" value="1"/>
</dbReference>
<dbReference type="PANTHER" id="PTHR11265">
    <property type="entry name" value="S-ADENOSYL-METHYLTRANSFERASE MRAW"/>
    <property type="match status" value="1"/>
</dbReference>
<dbReference type="Pfam" id="PF01795">
    <property type="entry name" value="Methyltransf_5"/>
    <property type="match status" value="1"/>
</dbReference>
<dbReference type="PIRSF" id="PIRSF004486">
    <property type="entry name" value="MraW"/>
    <property type="match status" value="1"/>
</dbReference>
<dbReference type="SUPFAM" id="SSF81799">
    <property type="entry name" value="Putative methyltransferase TM0872, insert domain"/>
    <property type="match status" value="1"/>
</dbReference>
<dbReference type="SUPFAM" id="SSF53335">
    <property type="entry name" value="S-adenosyl-L-methionine-dependent methyltransferases"/>
    <property type="match status" value="1"/>
</dbReference>
<gene>
    <name evidence="1" type="primary">rsmH</name>
    <name type="synonym">mraW</name>
    <name type="ordered locus">Reut_A2987</name>
</gene>
<proteinExistence type="inferred from homology"/>
<feature type="chain" id="PRO_0000223560" description="Ribosomal RNA small subunit methyltransferase H">
    <location>
        <begin position="1"/>
        <end position="332"/>
    </location>
</feature>
<feature type="binding site" evidence="1">
    <location>
        <begin position="42"/>
        <end position="44"/>
    </location>
    <ligand>
        <name>S-adenosyl-L-methionine</name>
        <dbReference type="ChEBI" id="CHEBI:59789"/>
    </ligand>
</feature>
<feature type="binding site" evidence="1">
    <location>
        <position position="62"/>
    </location>
    <ligand>
        <name>S-adenosyl-L-methionine</name>
        <dbReference type="ChEBI" id="CHEBI:59789"/>
    </ligand>
</feature>
<feature type="binding site" evidence="1">
    <location>
        <position position="86"/>
    </location>
    <ligand>
        <name>S-adenosyl-L-methionine</name>
        <dbReference type="ChEBI" id="CHEBI:59789"/>
    </ligand>
</feature>
<feature type="binding site" evidence="1">
    <location>
        <position position="105"/>
    </location>
    <ligand>
        <name>S-adenosyl-L-methionine</name>
        <dbReference type="ChEBI" id="CHEBI:59789"/>
    </ligand>
</feature>
<feature type="binding site" evidence="1">
    <location>
        <position position="112"/>
    </location>
    <ligand>
        <name>S-adenosyl-L-methionine</name>
        <dbReference type="ChEBI" id="CHEBI:59789"/>
    </ligand>
</feature>
<organism>
    <name type="scientific">Cupriavidus pinatubonensis (strain JMP 134 / LMG 1197)</name>
    <name type="common">Cupriavidus necator (strain JMP 134)</name>
    <dbReference type="NCBI Taxonomy" id="264198"/>
    <lineage>
        <taxon>Bacteria</taxon>
        <taxon>Pseudomonadati</taxon>
        <taxon>Pseudomonadota</taxon>
        <taxon>Betaproteobacteria</taxon>
        <taxon>Burkholderiales</taxon>
        <taxon>Burkholderiaceae</taxon>
        <taxon>Cupriavidus</taxon>
    </lineage>
</organism>
<reference key="1">
    <citation type="journal article" date="2010" name="PLoS ONE">
        <title>The complete multipartite genome sequence of Cupriavidus necator JMP134, a versatile pollutant degrader.</title>
        <authorList>
            <person name="Lykidis A."/>
            <person name="Perez-Pantoja D."/>
            <person name="Ledger T."/>
            <person name="Mavromatis K."/>
            <person name="Anderson I.J."/>
            <person name="Ivanova N.N."/>
            <person name="Hooper S.D."/>
            <person name="Lapidus A."/>
            <person name="Lucas S."/>
            <person name="Gonzalez B."/>
            <person name="Kyrpides N.C."/>
        </authorList>
    </citation>
    <scope>NUCLEOTIDE SEQUENCE [LARGE SCALE GENOMIC DNA]</scope>
    <source>
        <strain>JMP134 / LMG 1197</strain>
    </source>
</reference>
<keyword id="KW-0963">Cytoplasm</keyword>
<keyword id="KW-0489">Methyltransferase</keyword>
<keyword id="KW-0698">rRNA processing</keyword>
<keyword id="KW-0949">S-adenosyl-L-methionine</keyword>
<keyword id="KW-0808">Transferase</keyword>
<comment type="function">
    <text evidence="1">Specifically methylates the N4 position of cytidine in position 1402 (C1402) of 16S rRNA.</text>
</comment>
<comment type="catalytic activity">
    <reaction evidence="1">
        <text>cytidine(1402) in 16S rRNA + S-adenosyl-L-methionine = N(4)-methylcytidine(1402) in 16S rRNA + S-adenosyl-L-homocysteine + H(+)</text>
        <dbReference type="Rhea" id="RHEA:42928"/>
        <dbReference type="Rhea" id="RHEA-COMP:10286"/>
        <dbReference type="Rhea" id="RHEA-COMP:10287"/>
        <dbReference type="ChEBI" id="CHEBI:15378"/>
        <dbReference type="ChEBI" id="CHEBI:57856"/>
        <dbReference type="ChEBI" id="CHEBI:59789"/>
        <dbReference type="ChEBI" id="CHEBI:74506"/>
        <dbReference type="ChEBI" id="CHEBI:82748"/>
        <dbReference type="EC" id="2.1.1.199"/>
    </reaction>
</comment>
<comment type="subcellular location">
    <subcellularLocation>
        <location evidence="1">Cytoplasm</location>
    </subcellularLocation>
</comment>
<comment type="similarity">
    <text evidence="1">Belongs to the methyltransferase superfamily. RsmH family.</text>
</comment>
<name>RSMH_CUPPJ</name>
<protein>
    <recommendedName>
        <fullName evidence="1">Ribosomal RNA small subunit methyltransferase H</fullName>
        <ecNumber evidence="1">2.1.1.199</ecNumber>
    </recommendedName>
    <alternativeName>
        <fullName evidence="1">16S rRNA m(4)C1402 methyltransferase</fullName>
    </alternativeName>
    <alternativeName>
        <fullName evidence="1">rRNA (cytosine-N(4)-)-methyltransferase RsmH</fullName>
    </alternativeName>
</protein>
<evidence type="ECO:0000255" key="1">
    <source>
        <dbReference type="HAMAP-Rule" id="MF_01007"/>
    </source>
</evidence>
<accession>Q46WY6</accession>